<proteinExistence type="evidence at protein level"/>
<comment type="function">
    <text evidence="2">Shows nociceptive, edema-inducing and kininogenase activity with release of kallidin from low molecular weight kininogen. The cleavage occurs at Met-Lys bonds.</text>
</comment>
<comment type="activity regulation">
    <text evidence="2">Inhibited by tissue-kallikrein inhibitor TKI and trasylol. Plasma kallikrein inhibitor PKSI527 and classical inhibitors of serine-, metallo-, thiol- or aspartate-peptidases evokes a minor inhibition of the peptide digestion.</text>
</comment>
<comment type="subcellular location">
    <subcellularLocation>
        <location evidence="2">Secreted</location>
    </subcellularLocation>
</comment>
<comment type="tissue specificity">
    <text evidence="2">Expressed by the venom gland.</text>
</comment>
<comment type="PTM">
    <text evidence="3">Contains 4 disulfide bonds.</text>
</comment>
<comment type="similarity">
    <text evidence="3">Belongs to the natterin family.</text>
</comment>
<reference key="1">
    <citation type="journal article" date="2005" name="Biochimie">
        <title>Natterins, a new class of proteins with kininogenase activity characterized from Thalassophryne nattereri fish venom.</title>
        <authorList>
            <person name="Magalhaes G.S."/>
            <person name="Lopes-Ferreira M."/>
            <person name="Junqueira-de-Azevedo I.L.M."/>
            <person name="Spencer P.J."/>
            <person name="Araujo M.S."/>
            <person name="Portaro F.C.V."/>
            <person name="Ma L."/>
            <person name="Valente R.H."/>
            <person name="Juliano L."/>
            <person name="Fox J.W."/>
            <person name="Ho P.L."/>
            <person name="Moura-da-Silva A.M."/>
        </authorList>
    </citation>
    <scope>NUCLEOTIDE SEQUENCE [MRNA]</scope>
    <scope>PROTEIN SEQUENCE OF 29-40; 54-67; 89-111; 136-179; 214-226; 262-269 AND 287-310</scope>
    <scope>FUNCTION</scope>
    <scope>ACTIVITY REGULATION</scope>
    <scope>SUBCELLULAR LOCATION</scope>
    <scope>TISSUE SPECIFICITY</scope>
    <scope>IDENTIFICATION BY MASS SPECTROMETRY</scope>
    <source>
        <tissue>Venom</tissue>
        <tissue>Venom gland</tissue>
    </source>
</reference>
<protein>
    <recommendedName>
        <fullName>Natterin-1</fullName>
        <ecNumber>3.4.-.-</ecNumber>
    </recommendedName>
</protein>
<sequence>MIPSVLLVTLLLLSWTSAEKDLKVRVARSTNDETNLHWVKCGGSVPDGAVSIQNTYVSPARTEYVCKSNCEAGYYSTKDSKCHYPFGRVEQTTSVCEILVNRDNFELLEWKEGYAGSLPANAVSTCKTNRIYVGKGAYGLGKIEPAHHCLYYGWNGAETWTKTYQALTVNKDVIEQTMKDVKYQTEGVTVIQGKPEVMRKSTVNNKQCKEVTKTVTLSKDISTEERWDVTNSVTFGVTTTVTAGIPDVASASLAVSMEARRDFAHGASKTESQSYMVTVSVPVPPKQSCTVSMVAQVNKADVPFTATLIRTYRGGKKTQTTTKGVYRTTQVAETHADVEQCTIIGDEKDCPKASK</sequence>
<organism>
    <name type="scientific">Thalassophryne nattereri</name>
    <name type="common">Copper Joe toadfish</name>
    <dbReference type="NCBI Taxonomy" id="289382"/>
    <lineage>
        <taxon>Eukaryota</taxon>
        <taxon>Metazoa</taxon>
        <taxon>Chordata</taxon>
        <taxon>Craniata</taxon>
        <taxon>Vertebrata</taxon>
        <taxon>Euteleostomi</taxon>
        <taxon>Actinopterygii</taxon>
        <taxon>Neopterygii</taxon>
        <taxon>Teleostei</taxon>
        <taxon>Neoteleostei</taxon>
        <taxon>Acanthomorphata</taxon>
        <taxon>Batrachoidaria</taxon>
        <taxon>Batrachoididae</taxon>
        <taxon>Thalassophryne</taxon>
    </lineage>
</organism>
<feature type="signal peptide" evidence="1">
    <location>
        <begin position="1"/>
        <end position="18"/>
    </location>
</feature>
<feature type="propeptide" id="PRO_0000285217" evidence="4">
    <location>
        <begin position="19"/>
        <end position="27"/>
    </location>
</feature>
<feature type="chain" id="PRO_5000093994" description="Natterin-1" evidence="4">
    <location>
        <begin position="29"/>
        <end position="355"/>
    </location>
</feature>
<accession>Q66S25</accession>
<dbReference type="EC" id="3.4.-.-"/>
<dbReference type="EMBL" id="AY707908">
    <property type="protein sequence ID" value="AAU11822.1"/>
    <property type="molecule type" value="mRNA"/>
</dbReference>
<dbReference type="SMR" id="Q66S25"/>
<dbReference type="GO" id="GO:0005576">
    <property type="term" value="C:extracellular region"/>
    <property type="evidence" value="ECO:0007669"/>
    <property type="project" value="UniProtKB-SubCell"/>
</dbReference>
<dbReference type="GO" id="GO:0016787">
    <property type="term" value="F:hydrolase activity"/>
    <property type="evidence" value="ECO:0007669"/>
    <property type="project" value="UniProtKB-KW"/>
</dbReference>
<dbReference type="GO" id="GO:0090729">
    <property type="term" value="F:toxin activity"/>
    <property type="evidence" value="ECO:0007669"/>
    <property type="project" value="UniProtKB-KW"/>
</dbReference>
<dbReference type="CDD" id="cd20220">
    <property type="entry name" value="PFM_natterin-3-like"/>
    <property type="match status" value="1"/>
</dbReference>
<dbReference type="Gene3D" id="2.170.15.10">
    <property type="entry name" value="Proaerolysin, chain A, domain 3"/>
    <property type="match status" value="1"/>
</dbReference>
<dbReference type="InterPro" id="IPR006616">
    <property type="entry name" value="DM9_repeat"/>
</dbReference>
<dbReference type="InterPro" id="IPR053237">
    <property type="entry name" value="Natterin_C"/>
</dbReference>
<dbReference type="PANTHER" id="PTHR39244:SF5">
    <property type="entry name" value="NATTERIN-3-LIKE"/>
    <property type="match status" value="1"/>
</dbReference>
<dbReference type="PANTHER" id="PTHR39244">
    <property type="entry name" value="NATTERIN-4"/>
    <property type="match status" value="1"/>
</dbReference>
<dbReference type="Pfam" id="PF11901">
    <property type="entry name" value="DM9"/>
    <property type="match status" value="1"/>
</dbReference>
<dbReference type="SMART" id="SM00696">
    <property type="entry name" value="DM9"/>
    <property type="match status" value="1"/>
</dbReference>
<dbReference type="SUPFAM" id="SSF56973">
    <property type="entry name" value="Aerolisin/ETX pore-forming domain"/>
    <property type="match status" value="1"/>
</dbReference>
<evidence type="ECO:0000255" key="1"/>
<evidence type="ECO:0000269" key="2">
    <source>
    </source>
</evidence>
<evidence type="ECO:0000305" key="3"/>
<evidence type="ECO:0000305" key="4">
    <source>
    </source>
</evidence>
<keyword id="KW-0903">Direct protein sequencing</keyword>
<keyword id="KW-1015">Disulfide bond</keyword>
<keyword id="KW-0378">Hydrolase</keyword>
<keyword id="KW-0964">Secreted</keyword>
<keyword id="KW-0732">Signal</keyword>
<keyword id="KW-0800">Toxin</keyword>
<name>NATT1_THANI</name>